<organism>
    <name type="scientific">Cucumber mosaic virus (strain CS)</name>
    <name type="common">CMV</name>
    <dbReference type="NCBI Taxonomy" id="117109"/>
    <lineage>
        <taxon>Viruses</taxon>
        <taxon>Riboviria</taxon>
        <taxon>Orthornavirae</taxon>
        <taxon>Kitrinoviricota</taxon>
        <taxon>Alsuviricetes</taxon>
        <taxon>Martellivirales</taxon>
        <taxon>Bromoviridae</taxon>
        <taxon>Cucumovirus</taxon>
        <taxon>Cucumber mosaic virus</taxon>
    </lineage>
</organism>
<proteinExistence type="inferred from homology"/>
<protein>
    <recommendedName>
        <fullName>Movement protein</fullName>
        <shortName>MP</shortName>
    </recommendedName>
    <alternativeName>
        <fullName>Protein 3A</fullName>
    </alternativeName>
</protein>
<reference key="1">
    <citation type="journal article" date="1996" name="Nihon Shokubutsu Byori Gakkaiho">
        <title>Six new subgroup I members of Japanese cucumber mosaic virus as determined by nucleotide sequence analysis on RNA3's cDNAs.</title>
        <authorList>
            <person name="Chaumpluk P."/>
            <person name="Sasaki Y."/>
            <person name="Nakajima N."/>
            <person name="Nagano H."/>
            <person name="Nakamura I."/>
            <person name="Suzuki K."/>
            <person name="Mise K."/>
            <person name="Inouye N."/>
            <person name="Okuno T."/>
            <person name="Furusawa I."/>
        </authorList>
    </citation>
    <scope>NUCLEOTIDE SEQUENCE [GENOMIC RNA]</scope>
</reference>
<accession>Q66142</accession>
<evidence type="ECO:0000250" key="1"/>
<evidence type="ECO:0000256" key="2">
    <source>
        <dbReference type="SAM" id="MobiDB-lite"/>
    </source>
</evidence>
<evidence type="ECO:0000305" key="3"/>
<name>MVP_CMVCS</name>
<dbReference type="EMBL" id="D28489">
    <property type="protein sequence ID" value="BAA05850.1"/>
    <property type="molecule type" value="Genomic_RNA"/>
</dbReference>
<dbReference type="GO" id="GO:0044219">
    <property type="term" value="C:host cell plasmodesma"/>
    <property type="evidence" value="ECO:0007669"/>
    <property type="project" value="UniProtKB-SubCell"/>
</dbReference>
<dbReference type="GO" id="GO:0046740">
    <property type="term" value="P:transport of virus in host, cell to cell"/>
    <property type="evidence" value="ECO:0007669"/>
    <property type="project" value="UniProtKB-KW"/>
</dbReference>
<dbReference type="InterPro" id="IPR000603">
    <property type="entry name" value="MPV"/>
</dbReference>
<dbReference type="Pfam" id="PF00803">
    <property type="entry name" value="3A"/>
    <property type="match status" value="1"/>
</dbReference>
<sequence>MAFQGTSRTLTQQSSAATSDDLQKILFSPEAIKKMATECDLGRHHWMRADNAISVRPLVPEVTHSRIASFFKSGYDVGELCSKGYMSVPQVLCAVTRTVSTDAEGSLRIYLADLGDKELSPIDGQCVSLHNHDLPALVSFQPTYDCPMETVGNRKRCFAVVIERHGYIGYTGTTASVCSNWQARFSSKNNNYTHIAAGKTLVLPFNRLAEQTKPSAVARLLKSQLNNIESSQYLLTNAKINQNARSESEELNVESPPAAIGSSSASRSEAFRPQVVNGL</sequence>
<keyword id="KW-1031">Host cell junction</keyword>
<keyword id="KW-0813">Transport</keyword>
<keyword id="KW-0916">Viral movement protein</keyword>
<organismHost>
    <name type="scientific">Cucumis sativus</name>
    <name type="common">Cucumber</name>
    <dbReference type="NCBI Taxonomy" id="3659"/>
</organismHost>
<organismHost>
    <name type="scientific">Solanum lycopersicum</name>
    <name type="common">Tomato</name>
    <name type="synonym">Lycopersicon esculentum</name>
    <dbReference type="NCBI Taxonomy" id="4081"/>
</organismHost>
<organismHost>
    <name type="scientific">Spinacia oleracea</name>
    <name type="common">Spinach</name>
    <dbReference type="NCBI Taxonomy" id="3562"/>
</organismHost>
<feature type="chain" id="PRO_0000083235" description="Movement protein">
    <location>
        <begin position="1"/>
        <end position="279"/>
    </location>
</feature>
<feature type="region of interest" description="Disordered" evidence="2">
    <location>
        <begin position="246"/>
        <end position="279"/>
    </location>
</feature>
<feature type="compositionally biased region" description="Low complexity" evidence="2">
    <location>
        <begin position="254"/>
        <end position="268"/>
    </location>
</feature>
<gene>
    <name type="ORF">ORF3a</name>
</gene>
<comment type="function">
    <text evidence="1">Transports viral genome to neighboring plant cells directly through plasmosdesmata, without any budding. The movement protein allows efficient cell to cell propagation, by bypassing the host cell wall barrier. Acts by forming a tubular structure at the host plasmodesmata, enlarging it enough to allow free passage of virion capsids (By similarity).</text>
</comment>
<comment type="subcellular location">
    <subcellularLocation>
        <location evidence="1">Host cell junction</location>
        <location evidence="1">Host plasmodesma</location>
    </subcellularLocation>
    <text evidence="1">Assembles into long tubular structures at the surface of the infected protoplast.</text>
</comment>
<comment type="similarity">
    <text evidence="3">Belongs to the cucumovirus movement protein family.</text>
</comment>